<sequence length="340" mass="38103">MITLQNVVKEYTSRNNKVLAVDHVDLEIEQGEIFGVVGYSGAGKSTLIRMFNGLELPTEGSVEVDNLLISQIRGSKLRKARQQIGMIFQHFNLLWSRTVAENIAFPLEIAGVRGEKRRFRVNELIRLVGLEGKENAYPAELSGGQKQRVGIARALANNPKVLLCDEATSALDPQTTDEVLELLLDINKRLNLTIIVITHEMHVIRKICNRVAVMENGKVAELGDVLDVFRHPKEKVTQRFVRQVTDSDETEELIHLLLDNYAEGKIVKLLFMSENATQPVISQVAKENDVMLNVLHGNLTQTQNGAYGTLYVQVLGTEEAIEASLTQLRQLKVETEVLER</sequence>
<evidence type="ECO:0000255" key="1">
    <source>
        <dbReference type="HAMAP-Rule" id="MF_01719"/>
    </source>
</evidence>
<comment type="function">
    <text evidence="1">Part of the ABC transporter complex MetNIQ involved in methionine import. Responsible for energy coupling to the transport system.</text>
</comment>
<comment type="catalytic activity">
    <reaction evidence="1">
        <text>L-methionine(out) + ATP + H2O = L-methionine(in) + ADP + phosphate + H(+)</text>
        <dbReference type="Rhea" id="RHEA:29779"/>
        <dbReference type="ChEBI" id="CHEBI:15377"/>
        <dbReference type="ChEBI" id="CHEBI:15378"/>
        <dbReference type="ChEBI" id="CHEBI:30616"/>
        <dbReference type="ChEBI" id="CHEBI:43474"/>
        <dbReference type="ChEBI" id="CHEBI:57844"/>
        <dbReference type="ChEBI" id="CHEBI:456216"/>
        <dbReference type="EC" id="7.4.2.11"/>
    </reaction>
</comment>
<comment type="catalytic activity">
    <reaction evidence="1">
        <text>D-methionine(out) + ATP + H2O = D-methionine(in) + ADP + phosphate + H(+)</text>
        <dbReference type="Rhea" id="RHEA:29767"/>
        <dbReference type="ChEBI" id="CHEBI:15377"/>
        <dbReference type="ChEBI" id="CHEBI:15378"/>
        <dbReference type="ChEBI" id="CHEBI:30616"/>
        <dbReference type="ChEBI" id="CHEBI:43474"/>
        <dbReference type="ChEBI" id="CHEBI:57932"/>
        <dbReference type="ChEBI" id="CHEBI:456216"/>
        <dbReference type="EC" id="7.4.2.11"/>
    </reaction>
</comment>
<comment type="subunit">
    <text evidence="1">The complex is composed of two ATP-binding proteins (MetN), two transmembrane proteins (MetI) and a solute-binding protein (MetQ).</text>
</comment>
<comment type="subcellular location">
    <subcellularLocation>
        <location evidence="1">Cell membrane</location>
        <topology evidence="1">Peripheral membrane protein</topology>
    </subcellularLocation>
</comment>
<comment type="similarity">
    <text evidence="1">Belongs to the ABC transporter superfamily. Methionine importer (TC 3.A.1.24) family.</text>
</comment>
<proteinExistence type="inferred from homology"/>
<name>METN2_LISIN</name>
<organism>
    <name type="scientific">Listeria innocua serovar 6a (strain ATCC BAA-680 / CLIP 11262)</name>
    <dbReference type="NCBI Taxonomy" id="272626"/>
    <lineage>
        <taxon>Bacteria</taxon>
        <taxon>Bacillati</taxon>
        <taxon>Bacillota</taxon>
        <taxon>Bacilli</taxon>
        <taxon>Bacillales</taxon>
        <taxon>Listeriaceae</taxon>
        <taxon>Listeria</taxon>
    </lineage>
</organism>
<keyword id="KW-0029">Amino-acid transport</keyword>
<keyword id="KW-0067">ATP-binding</keyword>
<keyword id="KW-1003">Cell membrane</keyword>
<keyword id="KW-0472">Membrane</keyword>
<keyword id="KW-0547">Nucleotide-binding</keyword>
<keyword id="KW-1278">Translocase</keyword>
<keyword id="KW-0813">Transport</keyword>
<protein>
    <recommendedName>
        <fullName evidence="1">Methionine import ATP-binding protein MetN 2</fullName>
        <ecNumber evidence="1">7.4.2.11</ecNumber>
    </recommendedName>
</protein>
<dbReference type="EC" id="7.4.2.11" evidence="1"/>
<dbReference type="EMBL" id="AL596172">
    <property type="protein sequence ID" value="CAC97741.1"/>
    <property type="molecule type" value="Genomic_DNA"/>
</dbReference>
<dbReference type="PIR" id="AE1746">
    <property type="entry name" value="AE1746"/>
</dbReference>
<dbReference type="RefSeq" id="WP_010991228.1">
    <property type="nucleotide sequence ID" value="NC_003212.1"/>
</dbReference>
<dbReference type="SMR" id="Q928L8"/>
<dbReference type="STRING" id="272626.gene:17566894"/>
<dbReference type="KEGG" id="lin:lin2514"/>
<dbReference type="eggNOG" id="COG1135">
    <property type="taxonomic scope" value="Bacteria"/>
</dbReference>
<dbReference type="HOGENOM" id="CLU_000604_1_3_9"/>
<dbReference type="OrthoDB" id="9802264at2"/>
<dbReference type="Proteomes" id="UP000002513">
    <property type="component" value="Chromosome"/>
</dbReference>
<dbReference type="GO" id="GO:0005886">
    <property type="term" value="C:plasma membrane"/>
    <property type="evidence" value="ECO:0007669"/>
    <property type="project" value="UniProtKB-SubCell"/>
</dbReference>
<dbReference type="GO" id="GO:0033232">
    <property type="term" value="F:ABC-type D-methionine transporter activity"/>
    <property type="evidence" value="ECO:0007669"/>
    <property type="project" value="UniProtKB-EC"/>
</dbReference>
<dbReference type="GO" id="GO:0005524">
    <property type="term" value="F:ATP binding"/>
    <property type="evidence" value="ECO:0007669"/>
    <property type="project" value="UniProtKB-KW"/>
</dbReference>
<dbReference type="GO" id="GO:0016887">
    <property type="term" value="F:ATP hydrolysis activity"/>
    <property type="evidence" value="ECO:0007669"/>
    <property type="project" value="InterPro"/>
</dbReference>
<dbReference type="CDD" id="cd03258">
    <property type="entry name" value="ABC_MetN_methionine_transporter"/>
    <property type="match status" value="1"/>
</dbReference>
<dbReference type="FunFam" id="3.40.50.300:FF:000056">
    <property type="entry name" value="Cell division ATP-binding protein FtsE"/>
    <property type="match status" value="1"/>
</dbReference>
<dbReference type="Gene3D" id="3.30.70.260">
    <property type="match status" value="1"/>
</dbReference>
<dbReference type="Gene3D" id="3.40.50.300">
    <property type="entry name" value="P-loop containing nucleotide triphosphate hydrolases"/>
    <property type="match status" value="1"/>
</dbReference>
<dbReference type="InterPro" id="IPR003593">
    <property type="entry name" value="AAA+_ATPase"/>
</dbReference>
<dbReference type="InterPro" id="IPR003439">
    <property type="entry name" value="ABC_transporter-like_ATP-bd"/>
</dbReference>
<dbReference type="InterPro" id="IPR017871">
    <property type="entry name" value="ABC_transporter-like_CS"/>
</dbReference>
<dbReference type="InterPro" id="IPR045865">
    <property type="entry name" value="ACT-like_dom_sf"/>
</dbReference>
<dbReference type="InterPro" id="IPR041701">
    <property type="entry name" value="MetN_ABC"/>
</dbReference>
<dbReference type="InterPro" id="IPR050086">
    <property type="entry name" value="MetN_ABC_transporter-like"/>
</dbReference>
<dbReference type="InterPro" id="IPR018449">
    <property type="entry name" value="NIL_domain"/>
</dbReference>
<dbReference type="InterPro" id="IPR027417">
    <property type="entry name" value="P-loop_NTPase"/>
</dbReference>
<dbReference type="PANTHER" id="PTHR43166">
    <property type="entry name" value="AMINO ACID IMPORT ATP-BINDING PROTEIN"/>
    <property type="match status" value="1"/>
</dbReference>
<dbReference type="PANTHER" id="PTHR43166:SF36">
    <property type="entry name" value="METHIONINE IMPORT ATP-BINDING PROTEIN METN 2"/>
    <property type="match status" value="1"/>
</dbReference>
<dbReference type="Pfam" id="PF00005">
    <property type="entry name" value="ABC_tran"/>
    <property type="match status" value="1"/>
</dbReference>
<dbReference type="Pfam" id="PF09383">
    <property type="entry name" value="NIL"/>
    <property type="match status" value="1"/>
</dbReference>
<dbReference type="SMART" id="SM00382">
    <property type="entry name" value="AAA"/>
    <property type="match status" value="1"/>
</dbReference>
<dbReference type="SMART" id="SM00930">
    <property type="entry name" value="NIL"/>
    <property type="match status" value="1"/>
</dbReference>
<dbReference type="SUPFAM" id="SSF55021">
    <property type="entry name" value="ACT-like"/>
    <property type="match status" value="1"/>
</dbReference>
<dbReference type="SUPFAM" id="SSF52540">
    <property type="entry name" value="P-loop containing nucleoside triphosphate hydrolases"/>
    <property type="match status" value="1"/>
</dbReference>
<dbReference type="PROSITE" id="PS00211">
    <property type="entry name" value="ABC_TRANSPORTER_1"/>
    <property type="match status" value="1"/>
</dbReference>
<dbReference type="PROSITE" id="PS50893">
    <property type="entry name" value="ABC_TRANSPORTER_2"/>
    <property type="match status" value="1"/>
</dbReference>
<dbReference type="PROSITE" id="PS51264">
    <property type="entry name" value="METN"/>
    <property type="match status" value="1"/>
</dbReference>
<accession>Q928L8</accession>
<feature type="chain" id="PRO_0000270327" description="Methionine import ATP-binding protein MetN 2">
    <location>
        <begin position="1"/>
        <end position="340"/>
    </location>
</feature>
<feature type="domain" description="ABC transporter" evidence="1">
    <location>
        <begin position="2"/>
        <end position="241"/>
    </location>
</feature>
<feature type="binding site" evidence="1">
    <location>
        <begin position="38"/>
        <end position="45"/>
    </location>
    <ligand>
        <name>ATP</name>
        <dbReference type="ChEBI" id="CHEBI:30616"/>
    </ligand>
</feature>
<gene>
    <name evidence="1" type="primary">metN2</name>
    <name type="ordered locus">lin2514</name>
</gene>
<reference key="1">
    <citation type="journal article" date="2001" name="Science">
        <title>Comparative genomics of Listeria species.</title>
        <authorList>
            <person name="Glaser P."/>
            <person name="Frangeul L."/>
            <person name="Buchrieser C."/>
            <person name="Rusniok C."/>
            <person name="Amend A."/>
            <person name="Baquero F."/>
            <person name="Berche P."/>
            <person name="Bloecker H."/>
            <person name="Brandt P."/>
            <person name="Chakraborty T."/>
            <person name="Charbit A."/>
            <person name="Chetouani F."/>
            <person name="Couve E."/>
            <person name="de Daruvar A."/>
            <person name="Dehoux P."/>
            <person name="Domann E."/>
            <person name="Dominguez-Bernal G."/>
            <person name="Duchaud E."/>
            <person name="Durant L."/>
            <person name="Dussurget O."/>
            <person name="Entian K.-D."/>
            <person name="Fsihi H."/>
            <person name="Garcia-del Portillo F."/>
            <person name="Garrido P."/>
            <person name="Gautier L."/>
            <person name="Goebel W."/>
            <person name="Gomez-Lopez N."/>
            <person name="Hain T."/>
            <person name="Hauf J."/>
            <person name="Jackson D."/>
            <person name="Jones L.-M."/>
            <person name="Kaerst U."/>
            <person name="Kreft J."/>
            <person name="Kuhn M."/>
            <person name="Kunst F."/>
            <person name="Kurapkat G."/>
            <person name="Madueno E."/>
            <person name="Maitournam A."/>
            <person name="Mata Vicente J."/>
            <person name="Ng E."/>
            <person name="Nedjari H."/>
            <person name="Nordsiek G."/>
            <person name="Novella S."/>
            <person name="de Pablos B."/>
            <person name="Perez-Diaz J.-C."/>
            <person name="Purcell R."/>
            <person name="Remmel B."/>
            <person name="Rose M."/>
            <person name="Schlueter T."/>
            <person name="Simoes N."/>
            <person name="Tierrez A."/>
            <person name="Vazquez-Boland J.-A."/>
            <person name="Voss H."/>
            <person name="Wehland J."/>
            <person name="Cossart P."/>
        </authorList>
    </citation>
    <scope>NUCLEOTIDE SEQUENCE [LARGE SCALE GENOMIC DNA]</scope>
    <source>
        <strain>ATCC BAA-680 / CLIP 11262</strain>
    </source>
</reference>